<name>RL9_MICAN</name>
<sequence length="152" mass="16792">MAKRMQVILNQKVSKLGENGDVVEVAPGYARNYLIPQGVAVLATKGAIKQAEFRKEKERQRLLAEKQEAETRKTAIEKLSPYSIPKQVGENEAIFGTVTSQDVATVILENAKLEIDRRGITVPDIGQLGVYKVQVKLHPEVSADIEIKVIAQ</sequence>
<gene>
    <name evidence="1" type="primary">rplI</name>
    <name evidence="1" type="synonym">rpl9</name>
    <name type="ordered locus">MAE_07310</name>
</gene>
<evidence type="ECO:0000255" key="1">
    <source>
        <dbReference type="HAMAP-Rule" id="MF_00503"/>
    </source>
</evidence>
<evidence type="ECO:0000305" key="2"/>
<reference key="1">
    <citation type="journal article" date="2007" name="DNA Res.">
        <title>Complete genomic structure of the bloom-forming toxic cyanobacterium Microcystis aeruginosa NIES-843.</title>
        <authorList>
            <person name="Kaneko T."/>
            <person name="Nakajima N."/>
            <person name="Okamoto S."/>
            <person name="Suzuki I."/>
            <person name="Tanabe Y."/>
            <person name="Tamaoki M."/>
            <person name="Nakamura Y."/>
            <person name="Kasai F."/>
            <person name="Watanabe A."/>
            <person name="Kawashima K."/>
            <person name="Kishida Y."/>
            <person name="Ono A."/>
            <person name="Shimizu Y."/>
            <person name="Takahashi C."/>
            <person name="Minami C."/>
            <person name="Fujishiro T."/>
            <person name="Kohara M."/>
            <person name="Katoh M."/>
            <person name="Nakazaki N."/>
            <person name="Nakayama S."/>
            <person name="Yamada M."/>
            <person name="Tabata S."/>
            <person name="Watanabe M.M."/>
        </authorList>
    </citation>
    <scope>NUCLEOTIDE SEQUENCE [LARGE SCALE GENOMIC DNA]</scope>
    <source>
        <strain>NIES-843 / IAM M-247</strain>
    </source>
</reference>
<protein>
    <recommendedName>
        <fullName evidence="1">Large ribosomal subunit protein bL9</fullName>
    </recommendedName>
    <alternativeName>
        <fullName evidence="2">50S ribosomal protein L9</fullName>
    </alternativeName>
</protein>
<keyword id="KW-0687">Ribonucleoprotein</keyword>
<keyword id="KW-0689">Ribosomal protein</keyword>
<keyword id="KW-0694">RNA-binding</keyword>
<keyword id="KW-0699">rRNA-binding</keyword>
<organism>
    <name type="scientific">Microcystis aeruginosa (strain NIES-843 / IAM M-2473)</name>
    <dbReference type="NCBI Taxonomy" id="449447"/>
    <lineage>
        <taxon>Bacteria</taxon>
        <taxon>Bacillati</taxon>
        <taxon>Cyanobacteriota</taxon>
        <taxon>Cyanophyceae</taxon>
        <taxon>Oscillatoriophycideae</taxon>
        <taxon>Chroococcales</taxon>
        <taxon>Microcystaceae</taxon>
        <taxon>Microcystis</taxon>
    </lineage>
</organism>
<dbReference type="EMBL" id="AP009552">
    <property type="protein sequence ID" value="BAG00553.1"/>
    <property type="molecule type" value="Genomic_DNA"/>
</dbReference>
<dbReference type="RefSeq" id="WP_012264300.1">
    <property type="nucleotide sequence ID" value="NC_010296.1"/>
</dbReference>
<dbReference type="SMR" id="B0JQ94"/>
<dbReference type="STRING" id="449447.MAE_07310"/>
<dbReference type="PaxDb" id="449447-MAE_07310"/>
<dbReference type="EnsemblBacteria" id="BAG00553">
    <property type="protein sequence ID" value="BAG00553"/>
    <property type="gene ID" value="MAE_07310"/>
</dbReference>
<dbReference type="GeneID" id="66705240"/>
<dbReference type="KEGG" id="mar:MAE_07310"/>
<dbReference type="eggNOG" id="COG0359">
    <property type="taxonomic scope" value="Bacteria"/>
</dbReference>
<dbReference type="HOGENOM" id="CLU_078938_3_0_3"/>
<dbReference type="BioCyc" id="MAER449447:MAE_RS03255-MONOMER"/>
<dbReference type="Proteomes" id="UP000001510">
    <property type="component" value="Chromosome"/>
</dbReference>
<dbReference type="GO" id="GO:1990904">
    <property type="term" value="C:ribonucleoprotein complex"/>
    <property type="evidence" value="ECO:0007669"/>
    <property type="project" value="UniProtKB-KW"/>
</dbReference>
<dbReference type="GO" id="GO:0005840">
    <property type="term" value="C:ribosome"/>
    <property type="evidence" value="ECO:0007669"/>
    <property type="project" value="UniProtKB-KW"/>
</dbReference>
<dbReference type="GO" id="GO:0019843">
    <property type="term" value="F:rRNA binding"/>
    <property type="evidence" value="ECO:0007669"/>
    <property type="project" value="UniProtKB-UniRule"/>
</dbReference>
<dbReference type="GO" id="GO:0003735">
    <property type="term" value="F:structural constituent of ribosome"/>
    <property type="evidence" value="ECO:0007669"/>
    <property type="project" value="InterPro"/>
</dbReference>
<dbReference type="GO" id="GO:0006412">
    <property type="term" value="P:translation"/>
    <property type="evidence" value="ECO:0007669"/>
    <property type="project" value="UniProtKB-UniRule"/>
</dbReference>
<dbReference type="FunFam" id="3.40.5.10:FF:000003">
    <property type="entry name" value="50S ribosomal protein L9"/>
    <property type="match status" value="1"/>
</dbReference>
<dbReference type="Gene3D" id="3.10.430.100">
    <property type="entry name" value="Ribosomal protein L9, C-terminal domain"/>
    <property type="match status" value="1"/>
</dbReference>
<dbReference type="Gene3D" id="3.40.5.10">
    <property type="entry name" value="Ribosomal protein L9, N-terminal domain"/>
    <property type="match status" value="1"/>
</dbReference>
<dbReference type="HAMAP" id="MF_00503">
    <property type="entry name" value="Ribosomal_bL9"/>
    <property type="match status" value="1"/>
</dbReference>
<dbReference type="InterPro" id="IPR000244">
    <property type="entry name" value="Ribosomal_bL9"/>
</dbReference>
<dbReference type="InterPro" id="IPR009027">
    <property type="entry name" value="Ribosomal_bL9/RNase_H1_N"/>
</dbReference>
<dbReference type="InterPro" id="IPR020594">
    <property type="entry name" value="Ribosomal_bL9_bac/chp"/>
</dbReference>
<dbReference type="InterPro" id="IPR020069">
    <property type="entry name" value="Ribosomal_bL9_C"/>
</dbReference>
<dbReference type="InterPro" id="IPR036791">
    <property type="entry name" value="Ribosomal_bL9_C_sf"/>
</dbReference>
<dbReference type="InterPro" id="IPR020070">
    <property type="entry name" value="Ribosomal_bL9_N"/>
</dbReference>
<dbReference type="InterPro" id="IPR036935">
    <property type="entry name" value="Ribosomal_bL9_N_sf"/>
</dbReference>
<dbReference type="NCBIfam" id="TIGR00158">
    <property type="entry name" value="L9"/>
    <property type="match status" value="1"/>
</dbReference>
<dbReference type="PANTHER" id="PTHR21368">
    <property type="entry name" value="50S RIBOSOMAL PROTEIN L9"/>
    <property type="match status" value="1"/>
</dbReference>
<dbReference type="Pfam" id="PF03948">
    <property type="entry name" value="Ribosomal_L9_C"/>
    <property type="match status" value="1"/>
</dbReference>
<dbReference type="Pfam" id="PF01281">
    <property type="entry name" value="Ribosomal_L9_N"/>
    <property type="match status" value="1"/>
</dbReference>
<dbReference type="SUPFAM" id="SSF55658">
    <property type="entry name" value="L9 N-domain-like"/>
    <property type="match status" value="1"/>
</dbReference>
<dbReference type="SUPFAM" id="SSF55653">
    <property type="entry name" value="Ribosomal protein L9 C-domain"/>
    <property type="match status" value="1"/>
</dbReference>
<dbReference type="PROSITE" id="PS00651">
    <property type="entry name" value="RIBOSOMAL_L9"/>
    <property type="match status" value="1"/>
</dbReference>
<feature type="chain" id="PRO_1000081486" description="Large ribosomal subunit protein bL9">
    <location>
        <begin position="1"/>
        <end position="152"/>
    </location>
</feature>
<comment type="function">
    <text evidence="1">Binds to the 23S rRNA.</text>
</comment>
<comment type="similarity">
    <text evidence="1">Belongs to the bacterial ribosomal protein bL9 family.</text>
</comment>
<proteinExistence type="inferred from homology"/>
<accession>B0JQ94</accession>